<evidence type="ECO:0000250" key="1">
    <source>
        <dbReference type="UniProtKB" id="Q12043"/>
    </source>
</evidence>
<evidence type="ECO:0000255" key="2">
    <source>
        <dbReference type="PROSITE-ProRule" id="PRU01161"/>
    </source>
</evidence>
<evidence type="ECO:0000256" key="3">
    <source>
        <dbReference type="SAM" id="MobiDB-lite"/>
    </source>
</evidence>
<evidence type="ECO:0000269" key="4">
    <source>
    </source>
</evidence>
<evidence type="ECO:0000269" key="5">
    <source>
    </source>
</evidence>
<evidence type="ECO:0000269" key="6">
    <source>
    </source>
</evidence>
<evidence type="ECO:0000269" key="7">
    <source>
    </source>
</evidence>
<evidence type="ECO:0000269" key="8">
    <source>
    </source>
</evidence>
<evidence type="ECO:0000269" key="9">
    <source>
    </source>
</evidence>
<evidence type="ECO:0000269" key="10">
    <source>
    </source>
</evidence>
<evidence type="ECO:0000269" key="11">
    <source>
    </source>
</evidence>
<evidence type="ECO:0000305" key="12"/>
<evidence type="ECO:0000305" key="13">
    <source>
    </source>
</evidence>
<evidence type="ECO:0000305" key="14">
    <source>
    </source>
</evidence>
<evidence type="ECO:0000305" key="15">
    <source>
    </source>
</evidence>
<evidence type="ECO:0000305" key="16">
    <source ref="10"/>
</evidence>
<sequence length="642" mass="73613">MKETAQEYKVSAVIPTLLKNWILRVVYATLDHIPPFVWEILHVITDIYFFWVQKLINYVRPHSRVIYYNAIKKLDECDTYQMWCQQASVVDEITGANLWRRNFFSRRYDFNSVIEQYSILENMLREEKYDVVKEKFSTTGPCMLRNFAGIGDKKLFTKSLMGTKLLIEQYLTRILEGLDILNNQTLTPTSFFQRCKLSLGTTALILQGGSLFGLFHLGVIRGLLLQDLMPNIISGSSMGACVASLFGCLSNEQLKQLLTDDNLLNIIKNDVDLLKSCGYGNLEQHLNLGTLIQNLIHHGYSQDVYLFIRFVMKYIVKEKTFEEVYQITGKVFNIVIHPTDKSCPNLLNYVTTPNVLIKSAIECSLGSGVISEDTSLLCKNLENEIEPFLNINKNKQVKFLTPENANNPSITESPYTRLTELFNVNNFIVSLARPYLAPLVVNDLKHEIKTSKYYYYKHYPNMPPINANTVRKTQRSSSQSPIKAGTVEDLEPEPLMSPVPPSSAVNDSAEYIIPELGIPQLNFTEMEPLAFKFKYHLERKLKNIATMEFRHRMEVLDNLGLLCSLIKRLIIDEKTPRSATEIAVVPRMKSLSLTRIIEGQLNNIPYWIKSGERSTWPALALIKTRCAVEFKLDDIIRARRSR</sequence>
<dbReference type="EC" id="3.1.1.3" evidence="5"/>
<dbReference type="EMBL" id="Z54141">
    <property type="protein sequence ID" value="CAA90831.1"/>
    <property type="molecule type" value="Genomic_DNA"/>
</dbReference>
<dbReference type="EMBL" id="L34347">
    <property type="protein sequence ID" value="AAA53543.1"/>
    <property type="molecule type" value="Genomic_DNA"/>
</dbReference>
<dbReference type="EMBL" id="BK006946">
    <property type="protein sequence ID" value="DAA10214.1"/>
    <property type="molecule type" value="Genomic_DNA"/>
</dbReference>
<dbReference type="PIR" id="S59306">
    <property type="entry name" value="S59306"/>
</dbReference>
<dbReference type="RefSeq" id="NP_014044.1">
    <property type="nucleotide sequence ID" value="NM_001182824.1"/>
</dbReference>
<dbReference type="BioGRID" id="35493">
    <property type="interactions" value="92"/>
</dbReference>
<dbReference type="DIP" id="DIP-5641N"/>
<dbReference type="FunCoup" id="P40308">
    <property type="interactions" value="63"/>
</dbReference>
<dbReference type="IntAct" id="P40308">
    <property type="interactions" value="6"/>
</dbReference>
<dbReference type="MINT" id="P40308"/>
<dbReference type="STRING" id="4932.YMR313C"/>
<dbReference type="SwissLipids" id="SLP:000000052"/>
<dbReference type="SwissLipids" id="SLP:000000671"/>
<dbReference type="SwissLipids" id="SLP:000000678"/>
<dbReference type="iPTMnet" id="P40308"/>
<dbReference type="PaxDb" id="4932-YMR313C"/>
<dbReference type="PeptideAtlas" id="P40308"/>
<dbReference type="EnsemblFungi" id="YMR313C_mRNA">
    <property type="protein sequence ID" value="YMR313C"/>
    <property type="gene ID" value="YMR313C"/>
</dbReference>
<dbReference type="GeneID" id="855361"/>
<dbReference type="KEGG" id="sce:YMR313C"/>
<dbReference type="AGR" id="SGD:S000004930"/>
<dbReference type="SGD" id="S000004930">
    <property type="gene designation" value="TGL3"/>
</dbReference>
<dbReference type="VEuPathDB" id="FungiDB:YMR313C"/>
<dbReference type="eggNOG" id="KOG2214">
    <property type="taxonomic scope" value="Eukaryota"/>
</dbReference>
<dbReference type="GeneTree" id="ENSGT00940000176365"/>
<dbReference type="HOGENOM" id="CLU_009031_5_0_1"/>
<dbReference type="InParanoid" id="P40308"/>
<dbReference type="OrthoDB" id="10049244at2759"/>
<dbReference type="BioCyc" id="MetaCyc:G3O-32977-MONOMER"/>
<dbReference type="BioCyc" id="YEAST:G3O-32977-MONOMER"/>
<dbReference type="BioGRID-ORCS" id="855361">
    <property type="hits" value="1 hit in 10 CRISPR screens"/>
</dbReference>
<dbReference type="PRO" id="PR:P40308"/>
<dbReference type="Proteomes" id="UP000002311">
    <property type="component" value="Chromosome XIII"/>
</dbReference>
<dbReference type="RNAct" id="P40308">
    <property type="molecule type" value="protein"/>
</dbReference>
<dbReference type="GO" id="GO:0005811">
    <property type="term" value="C:lipid droplet"/>
    <property type="evidence" value="ECO:0000314"/>
    <property type="project" value="SGD"/>
</dbReference>
<dbReference type="GO" id="GO:0071618">
    <property type="term" value="F:lysophosphatidylethanolamine acyltransferase activity"/>
    <property type="evidence" value="ECO:0000314"/>
    <property type="project" value="SGD"/>
</dbReference>
<dbReference type="GO" id="GO:0004806">
    <property type="term" value="F:triacylglycerol lipase activity"/>
    <property type="evidence" value="ECO:0000314"/>
    <property type="project" value="SGD"/>
</dbReference>
<dbReference type="GO" id="GO:0007114">
    <property type="term" value="P:cell budding"/>
    <property type="evidence" value="ECO:0000315"/>
    <property type="project" value="SGD"/>
</dbReference>
<dbReference type="GO" id="GO:0006629">
    <property type="term" value="P:lipid metabolic process"/>
    <property type="evidence" value="ECO:0000315"/>
    <property type="project" value="SGD"/>
</dbReference>
<dbReference type="GO" id="GO:0019433">
    <property type="term" value="P:triglyceride catabolic process"/>
    <property type="evidence" value="ECO:0000315"/>
    <property type="project" value="SGD"/>
</dbReference>
<dbReference type="CDD" id="cd07229">
    <property type="entry name" value="Pat_TGL3_like"/>
    <property type="match status" value="1"/>
</dbReference>
<dbReference type="Gene3D" id="3.40.1090.10">
    <property type="entry name" value="Cytosolic phospholipase A2 catalytic domain"/>
    <property type="match status" value="1"/>
</dbReference>
<dbReference type="InterPro" id="IPR016035">
    <property type="entry name" value="Acyl_Trfase/lysoPLipase"/>
</dbReference>
<dbReference type="InterPro" id="IPR050301">
    <property type="entry name" value="NTE"/>
</dbReference>
<dbReference type="InterPro" id="IPR002641">
    <property type="entry name" value="PNPLA_dom"/>
</dbReference>
<dbReference type="InterPro" id="IPR021771">
    <property type="entry name" value="Triacylglycerol_lipase_N"/>
</dbReference>
<dbReference type="PANTHER" id="PTHR14226">
    <property type="entry name" value="NEUROPATHY TARGET ESTERASE/SWISS CHEESE D.MELANOGASTER"/>
    <property type="match status" value="1"/>
</dbReference>
<dbReference type="PANTHER" id="PTHR14226:SF44">
    <property type="entry name" value="TRIACYLGLYCEROL LIPASE 3"/>
    <property type="match status" value="1"/>
</dbReference>
<dbReference type="Pfam" id="PF11815">
    <property type="entry name" value="DUF3336"/>
    <property type="match status" value="1"/>
</dbReference>
<dbReference type="Pfam" id="PF01734">
    <property type="entry name" value="Patatin"/>
    <property type="match status" value="1"/>
</dbReference>
<dbReference type="SUPFAM" id="SSF52151">
    <property type="entry name" value="FabD/lysophospholipase-like"/>
    <property type="match status" value="1"/>
</dbReference>
<dbReference type="PROSITE" id="PS51635">
    <property type="entry name" value="PNPLA"/>
    <property type="match status" value="1"/>
</dbReference>
<protein>
    <recommendedName>
        <fullName>Triacylglycerol lipase 3</fullName>
        <ecNumber evidence="5">3.1.1.3</ecNumber>
    </recommendedName>
    <alternativeName>
        <fullName>Lipase 3</fullName>
    </alternativeName>
</protein>
<proteinExistence type="evidence at protein level"/>
<feature type="chain" id="PRO_0000203356" description="Triacylglycerol lipase 3">
    <location>
        <begin position="1"/>
        <end position="642"/>
    </location>
</feature>
<feature type="domain" description="PNPLA" evidence="2">
    <location>
        <begin position="204"/>
        <end position="392"/>
    </location>
</feature>
<feature type="region of interest" description="Disordered" evidence="3">
    <location>
        <begin position="471"/>
        <end position="502"/>
    </location>
</feature>
<feature type="short sequence motif" description="GXSXG" evidence="2">
    <location>
        <begin position="235"/>
        <end position="239"/>
    </location>
</feature>
<feature type="short sequence motif" description="HXXXXD acyltransferase motif" evidence="15 16">
    <location>
        <begin position="298"/>
        <end position="303"/>
    </location>
</feature>
<feature type="compositionally biased region" description="Polar residues" evidence="3">
    <location>
        <begin position="471"/>
        <end position="481"/>
    </location>
</feature>
<feature type="active site" description="Nucleophile" evidence="2">
    <location>
        <position position="237"/>
    </location>
</feature>
<feature type="active site" description="Proton acceptor" evidence="1">
    <location>
        <position position="403"/>
    </location>
</feature>
<feature type="mutagenesis site" description="Abolishes TAG lipolytic activity." evidence="7">
    <original>S</original>
    <variation>A</variation>
    <location>
        <position position="237"/>
    </location>
</feature>
<feature type="sequence conflict" description="In Ref. 3; AAA53543." evidence="12" ref="3">
    <original>A</original>
    <variation>P</variation>
    <location>
        <position position="96"/>
    </location>
</feature>
<feature type="sequence conflict" description="In Ref. 3; AAA53543." evidence="12" ref="3">
    <original>R</original>
    <variation>P</variation>
    <location>
        <position position="100"/>
    </location>
</feature>
<name>TGL3_YEAST</name>
<accession>P40308</accession>
<accession>D6W0E0</accession>
<keyword id="KW-0378">Hydrolase</keyword>
<keyword id="KW-0442">Lipid degradation</keyword>
<keyword id="KW-0551">Lipid droplet</keyword>
<keyword id="KW-0443">Lipid metabolism</keyword>
<keyword id="KW-1185">Reference proteome</keyword>
<organism>
    <name type="scientific">Saccharomyces cerevisiae (strain ATCC 204508 / S288c)</name>
    <name type="common">Baker's yeast</name>
    <dbReference type="NCBI Taxonomy" id="559292"/>
    <lineage>
        <taxon>Eukaryota</taxon>
        <taxon>Fungi</taxon>
        <taxon>Dikarya</taxon>
        <taxon>Ascomycota</taxon>
        <taxon>Saccharomycotina</taxon>
        <taxon>Saccharomycetes</taxon>
        <taxon>Saccharomycetales</taxon>
        <taxon>Saccharomycetaceae</taxon>
        <taxon>Saccharomyces</taxon>
    </lineage>
</organism>
<gene>
    <name type="primary">TGL3</name>
    <name type="ordered locus">YMR313C</name>
    <name type="ORF">YM9924.05C</name>
</gene>
<reference key="1">
    <citation type="journal article" date="1997" name="Nature">
        <title>The nucleotide sequence of Saccharomyces cerevisiae chromosome XIII.</title>
        <authorList>
            <person name="Bowman S."/>
            <person name="Churcher C.M."/>
            <person name="Badcock K."/>
            <person name="Brown D."/>
            <person name="Chillingworth T."/>
            <person name="Connor R."/>
            <person name="Dedman K."/>
            <person name="Devlin K."/>
            <person name="Gentles S."/>
            <person name="Hamlin N."/>
            <person name="Hunt S."/>
            <person name="Jagels K."/>
            <person name="Lye G."/>
            <person name="Moule S."/>
            <person name="Odell C."/>
            <person name="Pearson D."/>
            <person name="Rajandream M.A."/>
            <person name="Rice P."/>
            <person name="Skelton J."/>
            <person name="Walsh S.V."/>
            <person name="Whitehead S."/>
            <person name="Barrell B.G."/>
        </authorList>
    </citation>
    <scope>NUCLEOTIDE SEQUENCE [LARGE SCALE GENOMIC DNA]</scope>
    <source>
        <strain>ATCC 204508 / S288c</strain>
    </source>
</reference>
<reference key="2">
    <citation type="journal article" date="2014" name="G3 (Bethesda)">
        <title>The reference genome sequence of Saccharomyces cerevisiae: Then and now.</title>
        <authorList>
            <person name="Engel S.R."/>
            <person name="Dietrich F.S."/>
            <person name="Fisk D.G."/>
            <person name="Binkley G."/>
            <person name="Balakrishnan R."/>
            <person name="Costanzo M.C."/>
            <person name="Dwight S.S."/>
            <person name="Hitz B.C."/>
            <person name="Karra K."/>
            <person name="Nash R.S."/>
            <person name="Weng S."/>
            <person name="Wong E.D."/>
            <person name="Lloyd P."/>
            <person name="Skrzypek M.S."/>
            <person name="Miyasato S.R."/>
            <person name="Simison M."/>
            <person name="Cherry J.M."/>
        </authorList>
    </citation>
    <scope>GENOME REANNOTATION</scope>
    <source>
        <strain>ATCC 204508 / S288c</strain>
    </source>
</reference>
<reference key="3">
    <citation type="journal article" date="1994" name="Biochemistry">
        <title>PRE5 and PRE6, the last missing genes encoding 20S proteasome subunits from yeast? Indication for a set of 14 different subunits in the eukaryotic proteasome core.</title>
        <authorList>
            <person name="Heinemeyer W."/>
            <person name="Troendle N."/>
            <person name="Albrecht G."/>
            <person name="Wolf D.H."/>
        </authorList>
    </citation>
    <scope>NUCLEOTIDE SEQUENCE [GENOMIC DNA] OF 1-174</scope>
    <source>
        <strain>ATCC 204508 / S288c</strain>
    </source>
</reference>
<reference key="4">
    <citation type="journal article" date="1999" name="J. Bacteriol.">
        <title>Identification and characterization of major lipid particle proteins of the yeast Saccharomyces cerevisiae.</title>
        <authorList>
            <person name="Athenstaedt K."/>
            <person name="Zweytick D."/>
            <person name="Jandrositz A."/>
            <person name="Kohlwein S.D."/>
            <person name="Daum G."/>
        </authorList>
    </citation>
    <scope>FUNCTION</scope>
    <scope>SUBCELLULAR LOCATION</scope>
</reference>
<reference key="5">
    <citation type="journal article" date="2003" name="J. Biol. Chem.">
        <title>YMR313c/TGL3 encodes a novel triacylglycerol lipase located in lipid particles of Saccharomyces cerevisiae.</title>
        <authorList>
            <person name="Athenstaedt K."/>
            <person name="Daum G."/>
        </authorList>
    </citation>
    <scope>FUNCTION</scope>
    <scope>CATALYTIC ACTIVITY</scope>
    <scope>SUBCELLULAR LOCATION</scope>
</reference>
<reference key="6">
    <citation type="journal article" date="2003" name="Nature">
        <title>Global analysis of protein expression in yeast.</title>
        <authorList>
            <person name="Ghaemmaghami S."/>
            <person name="Huh W.-K."/>
            <person name="Bower K."/>
            <person name="Howson R.W."/>
            <person name="Belle A."/>
            <person name="Dephoure N."/>
            <person name="O'Shea E.K."/>
            <person name="Weissman J.S."/>
        </authorList>
    </citation>
    <scope>LEVEL OF PROTEIN EXPRESSION [LARGE SCALE ANALYSIS]</scope>
</reference>
<reference key="7">
    <citation type="journal article" date="2006" name="J. Biol. Chem.">
        <title>Obese yeast: triglyceride lipolysis is functionally conserved from mammals to yeast.</title>
        <authorList>
            <person name="Kurat C.F."/>
            <person name="Natter K."/>
            <person name="Petschnigg J."/>
            <person name="Wolinski H."/>
            <person name="Scheuringer K."/>
            <person name="Scholz H."/>
            <person name="Zimmermann R."/>
            <person name="Leber R."/>
            <person name="Zechner R."/>
            <person name="Kohlwein S.D."/>
        </authorList>
    </citation>
    <scope>FUNCTION</scope>
    <scope>CATALYTIC ACTIVITY</scope>
    <scope>DISRUPTION PHENOTYPE</scope>
    <scope>MUTAGENESIS OF SER-237</scope>
</reference>
<reference key="8">
    <citation type="journal article" date="2010" name="Mol. Biol. Cell">
        <title>Janus-faced enzymes yeast Tgl3p and Tgl5p catalyze lipase and acyltransferase reactions.</title>
        <authorList>
            <person name="Rajakumari S."/>
            <person name="Daum G."/>
        </authorList>
    </citation>
    <scope>FUNCTION</scope>
    <scope>CATALYTIC ACTIVITY</scope>
    <scope>BIOPHYSICOCHEMICAL PROPERTIES</scope>
</reference>
<reference key="9">
    <citation type="journal article" date="2011" name="Biochim. Biophys. Acta">
        <title>Lipid particles/droplets of the yeast Saccharomyces cerevisiae revisited: lipidome meets proteome.</title>
        <authorList>
            <person name="Grillitsch K."/>
            <person name="Connerth M."/>
            <person name="Kofeler H."/>
            <person name="Arrey T.N."/>
            <person name="Rietschel B."/>
            <person name="Wagner B."/>
            <person name="Karas M."/>
            <person name="Daum G."/>
        </authorList>
    </citation>
    <scope>SUBCELLULAR LOCATION</scope>
</reference>
<reference key="10">
    <citation type="journal article" date="2011" name="Front. Biol.">
        <title>Triacylglycerol lipases of the yeast.</title>
        <authorList>
            <person name="Grillitsch K."/>
            <person name="Daum G."/>
        </authorList>
    </citation>
    <scope>ACYLTRANSFERASE MOTIF</scope>
</reference>
<reference key="11">
    <citation type="journal article" date="2013" name="J. Biol. Chem.">
        <title>Regulation of the yeast triacylglycerol lipase Tgl3p by formation of nonpolar lipids.</title>
        <authorList>
            <person name="Schmidt C."/>
            <person name="Athenstaedt K."/>
            <person name="Koch B."/>
            <person name="Ploier B."/>
            <person name="Daum G."/>
        </authorList>
    </citation>
    <scope>ACTIVITY REGULATION</scope>
</reference>
<reference key="12">
    <citation type="journal article" date="2014" name="J. Lipid Res.">
        <title>High-confidence proteomic analysis of yeast lipid droplets identifies additional droplet proteins and reveals connections to dolichol synthesis and sterol acetylation.</title>
        <authorList>
            <person name="Currie E."/>
            <person name="Guo X."/>
            <person name="Christiano R."/>
            <person name="Chitraju C."/>
            <person name="Kory N."/>
            <person name="Harrison K."/>
            <person name="Haas J."/>
            <person name="Walther T.C."/>
            <person name="Farese R.V. Jr."/>
        </authorList>
    </citation>
    <scope>SUBCELLULAR LOCATION</scope>
</reference>
<comment type="function">
    <text evidence="4 5 7 8">Lipid particle-localized triacylglycerol (TAG) lipase. The lipid droplet/particle is a lipid storage compartment which serves as a depot of energy and building blocks for membrane lipid biosynthesis. Involved in the mobilization of the non-polar storage lipids triacylglycerols (TAGs) from lipid particles by hydrolysis of TAGs, releasing and supplying specific fatty acids to the appropriate metabolic pathways (PubMed:10515935, PubMed:12682047, PubMed:16267052). Also catalyzes the acylation of lysophosphatidic acid (LPA). Important for efficient sporulation, but rather through its acyltransferase than lipase activity (PubMed:20016004).</text>
</comment>
<comment type="catalytic activity">
    <reaction evidence="5">
        <text>a triacylglycerol + H2O = a diacylglycerol + a fatty acid + H(+)</text>
        <dbReference type="Rhea" id="RHEA:12044"/>
        <dbReference type="ChEBI" id="CHEBI:15377"/>
        <dbReference type="ChEBI" id="CHEBI:15378"/>
        <dbReference type="ChEBI" id="CHEBI:17855"/>
        <dbReference type="ChEBI" id="CHEBI:18035"/>
        <dbReference type="ChEBI" id="CHEBI:28868"/>
        <dbReference type="EC" id="3.1.1.3"/>
    </reaction>
    <physiologicalReaction direction="left-to-right" evidence="13">
        <dbReference type="Rhea" id="RHEA:12045"/>
    </physiologicalReaction>
</comment>
<comment type="catalytic activity">
    <reaction evidence="7 8">
        <text>1,2,3-tri-(9Z-octadecenoyl)-glycerol + H2O = di-(9Z)-octadecenoylglycerol + (9Z)-octadecenoate + H(+)</text>
        <dbReference type="Rhea" id="RHEA:38575"/>
        <dbReference type="ChEBI" id="CHEBI:15377"/>
        <dbReference type="ChEBI" id="CHEBI:15378"/>
        <dbReference type="ChEBI" id="CHEBI:30823"/>
        <dbReference type="ChEBI" id="CHEBI:53753"/>
        <dbReference type="ChEBI" id="CHEBI:75945"/>
    </reaction>
    <physiologicalReaction direction="left-to-right" evidence="14 15">
        <dbReference type="Rhea" id="RHEA:38576"/>
    </physiologicalReaction>
</comment>
<comment type="catalytic activity">
    <reaction evidence="7">
        <text>di-(9Z)-octadecenoylglycerol + H2O = (9Z-octadecenoyl)-glycerol + (9Z)-octadecenoate + H(+)</text>
        <dbReference type="Rhea" id="RHEA:47868"/>
        <dbReference type="ChEBI" id="CHEBI:15377"/>
        <dbReference type="ChEBI" id="CHEBI:15378"/>
        <dbReference type="ChEBI" id="CHEBI:30823"/>
        <dbReference type="ChEBI" id="CHEBI:75937"/>
        <dbReference type="ChEBI" id="CHEBI:75945"/>
    </reaction>
    <physiologicalReaction direction="left-to-right" evidence="14">
        <dbReference type="Rhea" id="RHEA:47869"/>
    </physiologicalReaction>
</comment>
<comment type="catalytic activity">
    <reaction evidence="8">
        <text>a 1-acyl-sn-glycero-3-phosphoethanolamine + (9Z)-octadecenoyl-CoA = 1-acyl-2-(9Z)-octadecenoyl-sn-glycero-3-phosphoethanolamine + CoA</text>
        <dbReference type="Rhea" id="RHEA:37731"/>
        <dbReference type="ChEBI" id="CHEBI:57287"/>
        <dbReference type="ChEBI" id="CHEBI:57387"/>
        <dbReference type="ChEBI" id="CHEBI:64381"/>
        <dbReference type="ChEBI" id="CHEBI:75238"/>
    </reaction>
    <physiologicalReaction direction="left-to-right" evidence="15">
        <dbReference type="Rhea" id="RHEA:37732"/>
    </physiologicalReaction>
</comment>
<comment type="catalytic activity">
    <reaction evidence="8">
        <text>a 1-acyl-sn-glycero-3-phosphoethanolamine + hexadecanoyl-CoA = 1-acyl-2-hexadecanoyl-sn-glycero-3-phosphoethanolamine + CoA</text>
        <dbReference type="Rhea" id="RHEA:37767"/>
        <dbReference type="ChEBI" id="CHEBI:57287"/>
        <dbReference type="ChEBI" id="CHEBI:57379"/>
        <dbReference type="ChEBI" id="CHEBI:64381"/>
        <dbReference type="ChEBI" id="CHEBI:75265"/>
    </reaction>
    <physiologicalReaction direction="left-to-right" evidence="15">
        <dbReference type="Rhea" id="RHEA:37768"/>
    </physiologicalReaction>
</comment>
<comment type="activity regulation">
    <text evidence="10">Loses its lipolytic activity in cells lacking nonpolar lipids.</text>
</comment>
<comment type="biophysicochemical properties">
    <kinetics>
        <KM evidence="8">19 uM for 1-acyl-sn-glycero-3-phosphoethanolamine</KM>
        <KM evidence="8">18 uM for (9Z)-octadecenoyl-CoA</KM>
        <Vmax evidence="8">46.26 nmol/min/mg enzyme towards 1-acyl-sn-glycero-3-phosphoethanolamine</Vmax>
        <Vmax evidence="8">44.25 nmol/min/mg enzyme towards (9Z)-octadecenoyl-CoA</Vmax>
    </kinetics>
</comment>
<comment type="subcellular location">
    <subcellularLocation>
        <location evidence="4 5 9 10 11">Lipid droplet</location>
    </subcellularLocation>
    <text evidence="10">Partially retained in the endoplasmic reticulum in cells lacking triacylglycerols.</text>
</comment>
<comment type="disruption phenotype">
    <text evidence="7">A double deletion of TGL3 and TGL4, the 2 major TGA lipases, leads to fat yeast, rendering growing cells unable to degrade triglycerides.</text>
</comment>
<comment type="miscellaneous">
    <text evidence="6">Present with 3210 molecules/cell in log phase SD medium.</text>
</comment>